<evidence type="ECO:0000255" key="1"/>
<evidence type="ECO:0000269" key="2">
    <source>
    </source>
</evidence>
<evidence type="ECO:0000269" key="3">
    <source>
    </source>
</evidence>
<evidence type="ECO:0000269" key="4">
    <source>
    </source>
</evidence>
<evidence type="ECO:0000269" key="5">
    <source>
    </source>
</evidence>
<evidence type="ECO:0000269" key="6">
    <source>
    </source>
</evidence>
<evidence type="ECO:0000305" key="7"/>
<feature type="signal peptide" evidence="2">
    <location>
        <begin position="1"/>
        <end position="18"/>
    </location>
</feature>
<feature type="chain" id="PRO_0000328552" description="Autocrine proliferation repressor protein A">
    <location>
        <begin position="19"/>
        <end position="494"/>
    </location>
</feature>
<feature type="glycosylation site" description="N-linked (GlcNAc...) asparagine" evidence="1">
    <location>
        <position position="37"/>
    </location>
</feature>
<feature type="glycosylation site" description="N-linked (GlcNAc...) asparagine" evidence="1">
    <location>
        <position position="153"/>
    </location>
</feature>
<feature type="glycosylation site" description="N-linked (GlcNAc...) asparagine" evidence="1">
    <location>
        <position position="302"/>
    </location>
</feature>
<accession>Q5XM24</accession>
<accession>Q54TM5</accession>
<sequence>MSKLLILLLLSLVASIFSTPLDDYVNAPDDTYKWTLNNTIEYETFTGYILELTSQTWMAEKSDWPVWKHWVSICVPKGVTTTTTFIYVDGGSNDNWKVPGSMDQTIEIVCLSSGSVSVGLTQIPNQPIIFNNDGVQRFEDDLVAYTWRQFLGNTSEPLWLARLPMTKAVVKCMDAVQEFGKTIGYNSENFVIAGASKRGWTTWLAGVVDPRIIAIVPIVMPILNMIPNMGHQFYAYGEWSFALNDYTGQGVMDYLNGPQMVELAAIVDPFSYRDRYTMPIYAIASSDDEFFLPDSPQFFWNNLTATPEKHLRIVPNAEHSLMGHQIDIILSIVTFVRLLITNQPRPTFTWDITYSEDLNSGTIVLTVPEGGIIPYKVKVWTAVTESTTRRDFRIITCMDITKCIQFIIWDPSDITPTSTGVYSITLSKPDAGWRAFFLEAEYLYAKNSIDDEYTLKFTSEVAIVPNTLPFGSCSEYNACGDGSQGDSASSTATL</sequence>
<organism>
    <name type="scientific">Dictyostelium discoideum</name>
    <name type="common">Social amoeba</name>
    <dbReference type="NCBI Taxonomy" id="44689"/>
    <lineage>
        <taxon>Eukaryota</taxon>
        <taxon>Amoebozoa</taxon>
        <taxon>Evosea</taxon>
        <taxon>Eumycetozoa</taxon>
        <taxon>Dictyostelia</taxon>
        <taxon>Dictyosteliales</taxon>
        <taxon>Dictyosteliaceae</taxon>
        <taxon>Dictyostelium</taxon>
    </lineage>
</organism>
<proteinExistence type="evidence at protein level"/>
<dbReference type="EMBL" id="AY750687">
    <property type="protein sequence ID" value="AAU95081.1"/>
    <property type="molecule type" value="Genomic_DNA"/>
</dbReference>
<dbReference type="EMBL" id="AAFI02000042">
    <property type="protein sequence ID" value="EAL66593.1"/>
    <property type="molecule type" value="Genomic_DNA"/>
</dbReference>
<dbReference type="RefSeq" id="XP_640566.1">
    <property type="nucleotide sequence ID" value="XM_635474.1"/>
</dbReference>
<dbReference type="STRING" id="44689.Q5XM24"/>
<dbReference type="ESTHER" id="dicdi-apra">
    <property type="family name" value="PhoPQ_related"/>
</dbReference>
<dbReference type="MEROPS" id="S82.001"/>
<dbReference type="GlyCosmos" id="Q5XM24">
    <property type="glycosylation" value="3 sites, No reported glycans"/>
</dbReference>
<dbReference type="GlyGen" id="Q5XM24">
    <property type="glycosylation" value="3 sites"/>
</dbReference>
<dbReference type="PaxDb" id="44689-DDB0231036"/>
<dbReference type="EnsemblProtists" id="EAL66593">
    <property type="protein sequence ID" value="EAL66593"/>
    <property type="gene ID" value="DDB_G0281663"/>
</dbReference>
<dbReference type="GeneID" id="8623176"/>
<dbReference type="KEGG" id="ddi:DDB_G0281663"/>
<dbReference type="dictyBase" id="DDB_G0281663">
    <property type="gene designation" value="aprA"/>
</dbReference>
<dbReference type="VEuPathDB" id="AmoebaDB:DDB_G0281663"/>
<dbReference type="eggNOG" id="ENOG502QU2G">
    <property type="taxonomic scope" value="Eukaryota"/>
</dbReference>
<dbReference type="HOGENOM" id="CLU_036488_1_0_1"/>
<dbReference type="InParanoid" id="Q5XM24"/>
<dbReference type="OMA" id="GWASWHA"/>
<dbReference type="PhylomeDB" id="Q5XM24"/>
<dbReference type="PRO" id="PR:Q5XM24"/>
<dbReference type="Proteomes" id="UP000002195">
    <property type="component" value="Chromosome 3"/>
</dbReference>
<dbReference type="GO" id="GO:0005576">
    <property type="term" value="C:extracellular region"/>
    <property type="evidence" value="ECO:0000314"/>
    <property type="project" value="dictyBase"/>
</dbReference>
<dbReference type="GO" id="GO:0032991">
    <property type="term" value="C:protein-containing complex"/>
    <property type="evidence" value="ECO:0000314"/>
    <property type="project" value="dictyBase"/>
</dbReference>
<dbReference type="GO" id="GO:0045499">
    <property type="term" value="F:chemorepellent activity"/>
    <property type="evidence" value="ECO:0000314"/>
    <property type="project" value="dictyBase"/>
</dbReference>
<dbReference type="GO" id="GO:0008233">
    <property type="term" value="F:peptidase activity"/>
    <property type="evidence" value="ECO:0000314"/>
    <property type="project" value="dictyBase"/>
</dbReference>
<dbReference type="GO" id="GO:0005102">
    <property type="term" value="F:signaling receptor binding"/>
    <property type="evidence" value="ECO:0000314"/>
    <property type="project" value="dictyBase"/>
</dbReference>
<dbReference type="GO" id="GO:0050919">
    <property type="term" value="P:negative chemotaxis"/>
    <property type="evidence" value="ECO:0000314"/>
    <property type="project" value="dictyBase"/>
</dbReference>
<dbReference type="GO" id="GO:0031158">
    <property type="term" value="P:negative regulation of aggregate size involved in sorocarp development"/>
    <property type="evidence" value="ECO:0000315"/>
    <property type="project" value="dictyBase"/>
</dbReference>
<dbReference type="GO" id="GO:1903665">
    <property type="term" value="P:negative regulation of asexual reproduction"/>
    <property type="evidence" value="ECO:0000315"/>
    <property type="project" value="dictyBase"/>
</dbReference>
<dbReference type="GO" id="GO:0046580">
    <property type="term" value="P:negative regulation of Ras protein signal transduction"/>
    <property type="evidence" value="ECO:0000314"/>
    <property type="project" value="dictyBase"/>
</dbReference>
<dbReference type="GO" id="GO:0072659">
    <property type="term" value="P:protein localization to plasma membrane"/>
    <property type="evidence" value="ECO:0000314"/>
    <property type="project" value="dictyBase"/>
</dbReference>
<dbReference type="GO" id="GO:0030435">
    <property type="term" value="P:sporulation resulting in formation of a cellular spore"/>
    <property type="evidence" value="ECO:0000315"/>
    <property type="project" value="dictyBase"/>
</dbReference>
<dbReference type="Gene3D" id="3.40.50.1820">
    <property type="entry name" value="alpha/beta hydrolase"/>
    <property type="match status" value="1"/>
</dbReference>
<dbReference type="InterPro" id="IPR029058">
    <property type="entry name" value="AB_hydrolase_fold"/>
</dbReference>
<dbReference type="InterPro" id="IPR009199">
    <property type="entry name" value="PhoPQ-act_pathogen-rel_PqaA"/>
</dbReference>
<dbReference type="PANTHER" id="PTHR31497">
    <property type="entry name" value="AUTOCRINE PROLIFERATION REPRESSOR PROTEIN A"/>
    <property type="match status" value="1"/>
</dbReference>
<dbReference type="PANTHER" id="PTHR31497:SF0">
    <property type="entry name" value="AUTOCRINE PROLIFERATION REPRESSOR PROTEIN A"/>
    <property type="match status" value="1"/>
</dbReference>
<dbReference type="Pfam" id="PF10142">
    <property type="entry name" value="PhoPQ_related"/>
    <property type="match status" value="1"/>
</dbReference>
<dbReference type="PIRSF" id="PIRSF014728">
    <property type="entry name" value="PqaA"/>
    <property type="match status" value="1"/>
</dbReference>
<dbReference type="SUPFAM" id="SSF53474">
    <property type="entry name" value="alpha/beta-Hydrolases"/>
    <property type="match status" value="1"/>
</dbReference>
<protein>
    <recommendedName>
        <fullName>Autocrine proliferation repressor protein A</fullName>
    </recommendedName>
    <alternativeName>
        <fullName>PhoPQ-activated pathogenicity-related protein</fullName>
    </alternativeName>
</protein>
<keyword id="KW-0131">Cell cycle</keyword>
<keyword id="KW-0903">Direct protein sequencing</keyword>
<keyword id="KW-0325">Glycoprotein</keyword>
<keyword id="KW-1185">Reference proteome</keyword>
<keyword id="KW-0964">Secreted</keyword>
<keyword id="KW-0732">Signal</keyword>
<comment type="function">
    <text evidence="2 6">Inhibitor that slows proliferation of secreting cells (also known as chalone). May function by binding to cell surface receptors. Requires cfaD for activity. Overexpression slows proliferation.</text>
</comment>
<comment type="subunit">
    <text evidence="5 6">Interacts with cfaD.</text>
</comment>
<comment type="subcellular location">
    <subcellularLocation>
        <location evidence="3 6">Secreted</location>
    </subcellularLocation>
</comment>
<comment type="developmental stage">
    <text evidence="2">Expressed at highest levels in vegetatively growing cells and declines during development (at protein level).</text>
</comment>
<comment type="induction">
    <text evidence="4">Up-regulated by phagocytic stimuli.</text>
</comment>
<comment type="disruption phenotype">
    <text evidence="2 6">Cells proliferate more rapidly than wild type cells and exhibit supernumerary centrosomes and a cytokinesis defect. They also produce fewer spores at culmination.</text>
</comment>
<comment type="similarity">
    <text evidence="7">Belongs to the pqaA family.</text>
</comment>
<gene>
    <name type="primary">aprA</name>
    <name type="ORF">DDB_G0281663</name>
</gene>
<name>APRA_DICDI</name>
<reference key="1">
    <citation type="journal article" date="2005" name="Development">
        <title>A secreted factor represses cell proliferation in Dictyostelium.</title>
        <authorList>
            <person name="Brock D.A."/>
            <person name="Gomer R.H."/>
        </authorList>
    </citation>
    <scope>NUCLEOTIDE SEQUENCE [GENOMIC DNA]</scope>
    <scope>PROTEIN SEQUENCE OF 19-31; 379-389 AND 435-456</scope>
    <scope>FUNCTION</scope>
    <scope>DEVELOPMENTAL STAGE</scope>
    <scope>DISRUPTION PHENOTYPE</scope>
</reference>
<reference key="2">
    <citation type="journal article" date="2005" name="Nature">
        <title>The genome of the social amoeba Dictyostelium discoideum.</title>
        <authorList>
            <person name="Eichinger L."/>
            <person name="Pachebat J.A."/>
            <person name="Gloeckner G."/>
            <person name="Rajandream M.A."/>
            <person name="Sucgang R."/>
            <person name="Berriman M."/>
            <person name="Song J."/>
            <person name="Olsen R."/>
            <person name="Szafranski K."/>
            <person name="Xu Q."/>
            <person name="Tunggal B."/>
            <person name="Kummerfeld S."/>
            <person name="Madera M."/>
            <person name="Konfortov B.A."/>
            <person name="Rivero F."/>
            <person name="Bankier A.T."/>
            <person name="Lehmann R."/>
            <person name="Hamlin N."/>
            <person name="Davies R."/>
            <person name="Gaudet P."/>
            <person name="Fey P."/>
            <person name="Pilcher K."/>
            <person name="Chen G."/>
            <person name="Saunders D."/>
            <person name="Sodergren E.J."/>
            <person name="Davis P."/>
            <person name="Kerhornou A."/>
            <person name="Nie X."/>
            <person name="Hall N."/>
            <person name="Anjard C."/>
            <person name="Hemphill L."/>
            <person name="Bason N."/>
            <person name="Farbrother P."/>
            <person name="Desany B."/>
            <person name="Just E."/>
            <person name="Morio T."/>
            <person name="Rost R."/>
            <person name="Churcher C.M."/>
            <person name="Cooper J."/>
            <person name="Haydock S."/>
            <person name="van Driessche N."/>
            <person name="Cronin A."/>
            <person name="Goodhead I."/>
            <person name="Muzny D.M."/>
            <person name="Mourier T."/>
            <person name="Pain A."/>
            <person name="Lu M."/>
            <person name="Harper D."/>
            <person name="Lindsay R."/>
            <person name="Hauser H."/>
            <person name="James K.D."/>
            <person name="Quiles M."/>
            <person name="Madan Babu M."/>
            <person name="Saito T."/>
            <person name="Buchrieser C."/>
            <person name="Wardroper A."/>
            <person name="Felder M."/>
            <person name="Thangavelu M."/>
            <person name="Johnson D."/>
            <person name="Knights A."/>
            <person name="Loulseged H."/>
            <person name="Mungall K.L."/>
            <person name="Oliver K."/>
            <person name="Price C."/>
            <person name="Quail M.A."/>
            <person name="Urushihara H."/>
            <person name="Hernandez J."/>
            <person name="Rabbinowitsch E."/>
            <person name="Steffen D."/>
            <person name="Sanders M."/>
            <person name="Ma J."/>
            <person name="Kohara Y."/>
            <person name="Sharp S."/>
            <person name="Simmonds M.N."/>
            <person name="Spiegler S."/>
            <person name="Tivey A."/>
            <person name="Sugano S."/>
            <person name="White B."/>
            <person name="Walker D."/>
            <person name="Woodward J.R."/>
            <person name="Winckler T."/>
            <person name="Tanaka Y."/>
            <person name="Shaulsky G."/>
            <person name="Schleicher M."/>
            <person name="Weinstock G.M."/>
            <person name="Rosenthal A."/>
            <person name="Cox E.C."/>
            <person name="Chisholm R.L."/>
            <person name="Gibbs R.A."/>
            <person name="Loomis W.F."/>
            <person name="Platzer M."/>
            <person name="Kay R.R."/>
            <person name="Williams J.G."/>
            <person name="Dear P.H."/>
            <person name="Noegel A.A."/>
            <person name="Barrell B.G."/>
            <person name="Kuspa A."/>
        </authorList>
    </citation>
    <scope>NUCLEOTIDE SEQUENCE [LARGE SCALE GENOMIC DNA]</scope>
    <source>
        <strain>AX4</strain>
    </source>
</reference>
<reference key="3">
    <citation type="journal article" date="2008" name="BMC Genomics">
        <title>Genome-wide transcriptional changes induced by phagocytosis or growth on bacteria in Dictyostelium.</title>
        <authorList>
            <person name="Sillo A."/>
            <person name="Bloomfield G."/>
            <person name="Balest A."/>
            <person name="Balbo A."/>
            <person name="Pergolizzi B."/>
            <person name="Peracino B."/>
            <person name="Skelton J."/>
            <person name="Ivens A."/>
            <person name="Bozzaro S."/>
        </authorList>
    </citation>
    <scope>INDUCTION [LARGE SCALE ANALYSIS]</scope>
</reference>
<reference key="4">
    <citation type="journal article" date="2008" name="J. Cell Sci.">
        <title>The secreted Dictyostelium protein CfaD is a chalone.</title>
        <authorList>
            <person name="Bakthavatsalam D."/>
            <person name="Brock D.A."/>
            <person name="Nikravan N.N."/>
            <person name="Houston K.D."/>
            <person name="Hatton R.D."/>
            <person name="Gomer R.H."/>
        </authorList>
    </citation>
    <scope>INTERACTION WITH CFAD</scope>
</reference>
<reference key="5">
    <citation type="journal article" date="2008" name="J. Cell Sci.">
        <authorList>
            <person name="Bakthavatsalam D."/>
            <person name="Brock D.A."/>
            <person name="Nikravan N.N."/>
            <person name="Houston K.D."/>
            <person name="Hatton R.D."/>
            <person name="Gomer R.H."/>
        </authorList>
    </citation>
    <scope>ERRATUM OF PUBMED:18611962</scope>
</reference>
<reference key="6">
    <citation type="journal article" date="2008" name="Mol. Biol. Cell">
        <title>Vacuole membrane protein 1 is an endoplasmic reticulum protein required for organelle biogenesis, protein secretion, and development.</title>
        <authorList>
            <person name="Calvo-Garrido J."/>
            <person name="Carilla-Latorre S."/>
            <person name="Lazaro-Dieguez F."/>
            <person name="Egea G."/>
            <person name="Escalante R."/>
        </authorList>
    </citation>
    <scope>SUBCELLULAR LOCATION</scope>
</reference>
<reference key="7">
    <citation type="journal article" date="2009" name="BMC Biochem.">
        <title>Dictyostelium cells bind a secreted autocrine factor that represses cell proliferation.</title>
        <authorList>
            <person name="Choe J.M."/>
            <person name="Bakthavatsalam D."/>
            <person name="Phillips J.E."/>
            <person name="Gomer R.H."/>
        </authorList>
    </citation>
    <scope>FUNCTION</scope>
    <scope>INTERACTION WITH CFAD</scope>
    <scope>SUBCELLULAR LOCATION</scope>
    <scope>DISRUPTION PHENOTYPE</scope>
</reference>